<comment type="function">
    <text evidence="2">Has bactericidal activity. May act as a ligand for C-C chemokine receptor CCR6. Positively regulates the sperm motility and bactericidal activity in a CCR6-dependent manner. Binds to CCR6 and triggers Ca2+ mobilization in the sperm which is important for its motility.</text>
</comment>
<comment type="subunit">
    <text evidence="2">Monomer. Homodimer.</text>
</comment>
<comment type="subcellular location">
    <subcellularLocation>
        <location evidence="2">Secreted</location>
    </subcellularLocation>
    <subcellularLocation>
        <location evidence="2">Membrane</location>
    </subcellularLocation>
    <text evidence="2">Associates with tumor cell membrane-derived microvesicles.</text>
</comment>
<comment type="tissue specificity">
    <text evidence="4">Highly expressed in kidney.</text>
</comment>
<comment type="similarity">
    <text evidence="5">Belongs to the beta-defensin family.</text>
</comment>
<name>DEFB1_RAT</name>
<reference key="1">
    <citation type="submission" date="1998-09" db="EMBL/GenBank/DDBJ databases">
        <title>Rat beta defensin-1 peptide: candidate marker for diabetic nephropathy.</title>
        <authorList>
            <person name="Page R.A."/>
            <person name="Malik A.N."/>
        </authorList>
    </citation>
    <scope>NUCLEOTIDE SEQUENCE [MRNA]</scope>
    <source>
        <strain>Goto-Kakizaki</strain>
        <tissue>Kidney</tissue>
    </source>
</reference>
<reference key="2">
    <citation type="journal article" date="1999" name="Infect. Immun.">
        <title>Molecular cloning and characterization of rat genes encoding homologues of human beta-defensins.</title>
        <authorList>
            <person name="Jia H.P."/>
            <person name="Mills J.N."/>
            <person name="Barahmand-Pour F."/>
            <person name="Nishimura D."/>
            <person name="Mallampali R.K."/>
            <person name="Wang G."/>
            <person name="Wiles K."/>
            <person name="Tack B.F."/>
            <person name="Bevins C.L."/>
            <person name="McCray P.B. Jr."/>
        </authorList>
    </citation>
    <scope>NUCLEOTIDE SEQUENCE [MRNA]</scope>
    <scope>TISSUE SPECIFICITY</scope>
    <source>
        <strain>Wistar</strain>
    </source>
</reference>
<gene>
    <name type="primary">Defb1</name>
</gene>
<accession>O89117</accession>
<feature type="signal peptide" evidence="3">
    <location>
        <begin position="1"/>
        <end position="21"/>
    </location>
</feature>
<feature type="propeptide" id="PRO_0000006959" evidence="1">
    <location>
        <begin position="22"/>
        <end position="32"/>
    </location>
</feature>
<feature type="peptide" id="PRO_0000006960" description="Beta-defensin 1">
    <location>
        <begin position="33"/>
        <end position="69"/>
    </location>
</feature>
<feature type="disulfide bond" evidence="1">
    <location>
        <begin position="37"/>
        <end position="66"/>
    </location>
</feature>
<feature type="disulfide bond" evidence="1">
    <location>
        <begin position="44"/>
        <end position="59"/>
    </location>
</feature>
<feature type="disulfide bond" evidence="1">
    <location>
        <begin position="49"/>
        <end position="67"/>
    </location>
</feature>
<organism>
    <name type="scientific">Rattus norvegicus</name>
    <name type="common">Rat</name>
    <dbReference type="NCBI Taxonomy" id="10116"/>
    <lineage>
        <taxon>Eukaryota</taxon>
        <taxon>Metazoa</taxon>
        <taxon>Chordata</taxon>
        <taxon>Craniata</taxon>
        <taxon>Vertebrata</taxon>
        <taxon>Euteleostomi</taxon>
        <taxon>Mammalia</taxon>
        <taxon>Eutheria</taxon>
        <taxon>Euarchontoglires</taxon>
        <taxon>Glires</taxon>
        <taxon>Rodentia</taxon>
        <taxon>Myomorpha</taxon>
        <taxon>Muroidea</taxon>
        <taxon>Muridae</taxon>
        <taxon>Murinae</taxon>
        <taxon>Rattus</taxon>
    </lineage>
</organism>
<sequence>MKTHYFLLVMLFFLFSQMELGAGILTSLGRRTDQYRCLQNGGFCLRSSCPSHTKLQGTCKPDKPNCCRS</sequence>
<evidence type="ECO:0000250" key="1"/>
<evidence type="ECO:0000250" key="2">
    <source>
        <dbReference type="UniProtKB" id="P60022"/>
    </source>
</evidence>
<evidence type="ECO:0000255" key="3"/>
<evidence type="ECO:0000269" key="4">
    <source>
    </source>
</evidence>
<evidence type="ECO:0000305" key="5"/>
<proteinExistence type="evidence at transcript level"/>
<keyword id="KW-0044">Antibiotic</keyword>
<keyword id="KW-0929">Antimicrobial</keyword>
<keyword id="KW-0211">Defensin</keyword>
<keyword id="KW-1015">Disulfide bond</keyword>
<keyword id="KW-0472">Membrane</keyword>
<keyword id="KW-1185">Reference proteome</keyword>
<keyword id="KW-0964">Secreted</keyword>
<keyword id="KW-0732">Signal</keyword>
<dbReference type="EMBL" id="AF093536">
    <property type="protein sequence ID" value="AAC61871.1"/>
    <property type="molecule type" value="mRNA"/>
</dbReference>
<dbReference type="EMBL" id="AF068860">
    <property type="protein sequence ID" value="AAC28071.1"/>
    <property type="molecule type" value="mRNA"/>
</dbReference>
<dbReference type="RefSeq" id="NP_113998.1">
    <property type="nucleotide sequence ID" value="NM_031810.2"/>
</dbReference>
<dbReference type="SMR" id="O89117"/>
<dbReference type="FunCoup" id="O89117">
    <property type="interactions" value="55"/>
</dbReference>
<dbReference type="STRING" id="10116.ENSRNOP00000018428"/>
<dbReference type="PaxDb" id="10116-ENSRNOP00000018428"/>
<dbReference type="Ensembl" id="ENSRNOT00000018427.5">
    <property type="protein sequence ID" value="ENSRNOP00000018428.2"/>
    <property type="gene ID" value="ENSRNOG00000013768.5"/>
</dbReference>
<dbReference type="GeneID" id="83687"/>
<dbReference type="KEGG" id="rno:83687"/>
<dbReference type="UCSC" id="RGD:619943">
    <property type="organism name" value="rat"/>
</dbReference>
<dbReference type="AGR" id="RGD:619943"/>
<dbReference type="CTD" id="1672"/>
<dbReference type="RGD" id="619943">
    <property type="gene designation" value="Defb1"/>
</dbReference>
<dbReference type="eggNOG" id="ENOG502TDMV">
    <property type="taxonomic scope" value="Eukaryota"/>
</dbReference>
<dbReference type="GeneTree" id="ENSGT00940000166542"/>
<dbReference type="HOGENOM" id="CLU_189296_1_0_1"/>
<dbReference type="InParanoid" id="O89117"/>
<dbReference type="OMA" id="SGKAKCC"/>
<dbReference type="OrthoDB" id="9622366at2759"/>
<dbReference type="PhylomeDB" id="O89117"/>
<dbReference type="Reactome" id="R-RNO-1461957">
    <property type="pathway name" value="Beta defensins"/>
</dbReference>
<dbReference type="Reactome" id="R-RNO-1461973">
    <property type="pathway name" value="Defensins"/>
</dbReference>
<dbReference type="PRO" id="PR:O89117"/>
<dbReference type="Proteomes" id="UP000002494">
    <property type="component" value="Chromosome 16"/>
</dbReference>
<dbReference type="Bgee" id="ENSRNOG00000013768">
    <property type="expression patterns" value="Expressed in kidney and 13 other cell types or tissues"/>
</dbReference>
<dbReference type="GO" id="GO:0005615">
    <property type="term" value="C:extracellular space"/>
    <property type="evidence" value="ECO:0000266"/>
    <property type="project" value="RGD"/>
</dbReference>
<dbReference type="GO" id="GO:0016020">
    <property type="term" value="C:membrane"/>
    <property type="evidence" value="ECO:0000250"/>
    <property type="project" value="UniProtKB"/>
</dbReference>
<dbReference type="GO" id="GO:1990742">
    <property type="term" value="C:microvesicle"/>
    <property type="evidence" value="ECO:0000250"/>
    <property type="project" value="UniProtKB"/>
</dbReference>
<dbReference type="GO" id="GO:0097225">
    <property type="term" value="C:sperm midpiece"/>
    <property type="evidence" value="ECO:0000250"/>
    <property type="project" value="UniProtKB"/>
</dbReference>
<dbReference type="GO" id="GO:0031731">
    <property type="term" value="F:CCR6 chemokine receptor binding"/>
    <property type="evidence" value="ECO:0000250"/>
    <property type="project" value="UniProtKB"/>
</dbReference>
<dbReference type="GO" id="GO:0042802">
    <property type="term" value="F:identical protein binding"/>
    <property type="evidence" value="ECO:0000250"/>
    <property type="project" value="UniProtKB"/>
</dbReference>
<dbReference type="GO" id="GO:0061844">
    <property type="term" value="P:antimicrobial humoral immune response mediated by antimicrobial peptide"/>
    <property type="evidence" value="ECO:0000266"/>
    <property type="project" value="RGD"/>
</dbReference>
<dbReference type="GO" id="GO:0019722">
    <property type="term" value="P:calcium-mediated signaling"/>
    <property type="evidence" value="ECO:0000250"/>
    <property type="project" value="UniProtKB"/>
</dbReference>
<dbReference type="GO" id="GO:0042742">
    <property type="term" value="P:defense response to bacterium"/>
    <property type="evidence" value="ECO:0000266"/>
    <property type="project" value="RGD"/>
</dbReference>
<dbReference type="GO" id="GO:0050829">
    <property type="term" value="P:defense response to Gram-negative bacterium"/>
    <property type="evidence" value="ECO:0000250"/>
    <property type="project" value="UniProtKB"/>
</dbReference>
<dbReference type="GO" id="GO:0050830">
    <property type="term" value="P:defense response to Gram-positive bacterium"/>
    <property type="evidence" value="ECO:0000250"/>
    <property type="project" value="UniProtKB"/>
</dbReference>
<dbReference type="GO" id="GO:0045087">
    <property type="term" value="P:innate immune response"/>
    <property type="evidence" value="ECO:0000266"/>
    <property type="project" value="RGD"/>
</dbReference>
<dbReference type="GO" id="GO:0002227">
    <property type="term" value="P:innate immune response in mucosa"/>
    <property type="evidence" value="ECO:0000266"/>
    <property type="project" value="RGD"/>
</dbReference>
<dbReference type="GO" id="GO:0060474">
    <property type="term" value="P:positive regulation of flagellated sperm motility involved in capacitation"/>
    <property type="evidence" value="ECO:0000250"/>
    <property type="project" value="UniProtKB"/>
</dbReference>
<dbReference type="GO" id="GO:0009617">
    <property type="term" value="P:response to bacterium"/>
    <property type="evidence" value="ECO:0000266"/>
    <property type="project" value="RGD"/>
</dbReference>
<dbReference type="GO" id="GO:0033574">
    <property type="term" value="P:response to testosterone"/>
    <property type="evidence" value="ECO:0000270"/>
    <property type="project" value="RGD"/>
</dbReference>
<dbReference type="FunFam" id="3.10.360.10:FF:000001">
    <property type="entry name" value="Beta-defensin 1"/>
    <property type="match status" value="1"/>
</dbReference>
<dbReference type="Gene3D" id="3.10.360.10">
    <property type="entry name" value="Antimicrobial Peptide, Beta-defensin 2, Chain A"/>
    <property type="match status" value="1"/>
</dbReference>
<dbReference type="InterPro" id="IPR001855">
    <property type="entry name" value="Defensin_beta-like"/>
</dbReference>
<dbReference type="PANTHER" id="PTHR21388:SF9">
    <property type="entry name" value="BETA-DEFENSIN 1"/>
    <property type="match status" value="1"/>
</dbReference>
<dbReference type="PANTHER" id="PTHR21388">
    <property type="entry name" value="BETA-DEFENSIN-RELATED"/>
    <property type="match status" value="1"/>
</dbReference>
<dbReference type="Pfam" id="PF00711">
    <property type="entry name" value="Defensin_beta"/>
    <property type="match status" value="1"/>
</dbReference>
<dbReference type="SUPFAM" id="SSF57392">
    <property type="entry name" value="Defensin-like"/>
    <property type="match status" value="1"/>
</dbReference>
<protein>
    <recommendedName>
        <fullName>Beta-defensin 1</fullName>
        <shortName>BD-1</shortName>
        <shortName>rBD-1</shortName>
    </recommendedName>
    <alternativeName>
        <fullName>Defensin, beta 1</fullName>
    </alternativeName>
</protein>